<keyword id="KW-0010">Activator</keyword>
<keyword id="KW-0963">Cytoplasm</keyword>
<keyword id="KW-0678">Repressor</keyword>
<keyword id="KW-0694">RNA-binding</keyword>
<keyword id="KW-0810">Translation regulation</keyword>
<protein>
    <recommendedName>
        <fullName evidence="1">Translational regulator CsrA</fullName>
    </recommendedName>
    <alternativeName>
        <fullName evidence="1">Carbon storage regulator</fullName>
    </alternativeName>
</protein>
<gene>
    <name evidence="1" type="primary">csrA</name>
    <name type="ordered locus">APP7_0693</name>
</gene>
<reference key="1">
    <citation type="submission" date="2008-06" db="EMBL/GenBank/DDBJ databases">
        <title>Genome and proteome analysis of A. pleuropneumoniae serotype 7.</title>
        <authorList>
            <person name="Linke B."/>
            <person name="Buettner F."/>
            <person name="Martinez-Arias R."/>
            <person name="Goesmann A."/>
            <person name="Baltes N."/>
            <person name="Tegetmeyer H."/>
            <person name="Singh M."/>
            <person name="Gerlach G.F."/>
        </authorList>
    </citation>
    <scope>NUCLEOTIDE SEQUENCE [LARGE SCALE GENOMIC DNA]</scope>
    <source>
        <strain>AP76</strain>
    </source>
</reference>
<name>CSRA_ACTP7</name>
<comment type="function">
    <text evidence="1">A key translational regulator that binds mRNA to regulate translation initiation and/or mRNA stability. Mediates global changes in gene expression, shifting from rapid growth to stress survival by linking envelope stress, the stringent response and the catabolite repression systems. Usually binds in the 5'-UTR; binding at or near the Shine-Dalgarno sequence prevents ribosome-binding, repressing translation, binding elsewhere in the 5'-UTR can activate translation and/or stabilize the mRNA. Its function is antagonized by small RNA(s).</text>
</comment>
<comment type="subunit">
    <text evidence="1">Homodimer; the beta-strands of each monomer intercalate to form a hydrophobic core, while the alpha-helices form wings that extend away from the core.</text>
</comment>
<comment type="subcellular location">
    <subcellularLocation>
        <location evidence="1">Cytoplasm</location>
    </subcellularLocation>
</comment>
<comment type="similarity">
    <text evidence="1">Belongs to the CsrA/RsmA family.</text>
</comment>
<evidence type="ECO:0000255" key="1">
    <source>
        <dbReference type="HAMAP-Rule" id="MF_00167"/>
    </source>
</evidence>
<dbReference type="EMBL" id="CP001091">
    <property type="protein sequence ID" value="ACE61345.1"/>
    <property type="molecule type" value="Genomic_DNA"/>
</dbReference>
<dbReference type="RefSeq" id="WP_005596946.1">
    <property type="nucleotide sequence ID" value="NC_010939.1"/>
</dbReference>
<dbReference type="SMR" id="B3H176"/>
<dbReference type="GeneID" id="48598836"/>
<dbReference type="KEGG" id="apa:APP7_0693"/>
<dbReference type="HOGENOM" id="CLU_164837_2_1_6"/>
<dbReference type="Proteomes" id="UP000001226">
    <property type="component" value="Chromosome"/>
</dbReference>
<dbReference type="GO" id="GO:0005829">
    <property type="term" value="C:cytosol"/>
    <property type="evidence" value="ECO:0007669"/>
    <property type="project" value="TreeGrafter"/>
</dbReference>
<dbReference type="GO" id="GO:0048027">
    <property type="term" value="F:mRNA 5'-UTR binding"/>
    <property type="evidence" value="ECO:0007669"/>
    <property type="project" value="UniProtKB-UniRule"/>
</dbReference>
<dbReference type="GO" id="GO:0006402">
    <property type="term" value="P:mRNA catabolic process"/>
    <property type="evidence" value="ECO:0007669"/>
    <property type="project" value="InterPro"/>
</dbReference>
<dbReference type="GO" id="GO:0045947">
    <property type="term" value="P:negative regulation of translational initiation"/>
    <property type="evidence" value="ECO:0007669"/>
    <property type="project" value="UniProtKB-UniRule"/>
</dbReference>
<dbReference type="GO" id="GO:0045948">
    <property type="term" value="P:positive regulation of translational initiation"/>
    <property type="evidence" value="ECO:0007669"/>
    <property type="project" value="UniProtKB-UniRule"/>
</dbReference>
<dbReference type="GO" id="GO:0006109">
    <property type="term" value="P:regulation of carbohydrate metabolic process"/>
    <property type="evidence" value="ECO:0007669"/>
    <property type="project" value="UniProtKB-UniRule"/>
</dbReference>
<dbReference type="FunFam" id="2.60.40.4380:FF:000001">
    <property type="entry name" value="Translational regulator CsrA"/>
    <property type="match status" value="1"/>
</dbReference>
<dbReference type="Gene3D" id="2.60.40.4380">
    <property type="entry name" value="Translational regulator CsrA"/>
    <property type="match status" value="1"/>
</dbReference>
<dbReference type="HAMAP" id="MF_00167">
    <property type="entry name" value="CsrA"/>
    <property type="match status" value="1"/>
</dbReference>
<dbReference type="InterPro" id="IPR003751">
    <property type="entry name" value="CsrA"/>
</dbReference>
<dbReference type="InterPro" id="IPR036107">
    <property type="entry name" value="CsrA_sf"/>
</dbReference>
<dbReference type="NCBIfam" id="TIGR00202">
    <property type="entry name" value="csrA"/>
    <property type="match status" value="1"/>
</dbReference>
<dbReference type="NCBIfam" id="NF002469">
    <property type="entry name" value="PRK01712.1"/>
    <property type="match status" value="1"/>
</dbReference>
<dbReference type="PANTHER" id="PTHR34984">
    <property type="entry name" value="CARBON STORAGE REGULATOR"/>
    <property type="match status" value="1"/>
</dbReference>
<dbReference type="PANTHER" id="PTHR34984:SF1">
    <property type="entry name" value="CARBON STORAGE REGULATOR"/>
    <property type="match status" value="1"/>
</dbReference>
<dbReference type="Pfam" id="PF02599">
    <property type="entry name" value="CsrA"/>
    <property type="match status" value="1"/>
</dbReference>
<dbReference type="SUPFAM" id="SSF117130">
    <property type="entry name" value="CsrA-like"/>
    <property type="match status" value="1"/>
</dbReference>
<sequence>MLILTRKIGESLLIGDNVEITVLSVRGNQVKLGVNAPKEVSVHREEIYQRIKALADDVASDTQQ</sequence>
<organism>
    <name type="scientific">Actinobacillus pleuropneumoniae serotype 7 (strain AP76)</name>
    <dbReference type="NCBI Taxonomy" id="537457"/>
    <lineage>
        <taxon>Bacteria</taxon>
        <taxon>Pseudomonadati</taxon>
        <taxon>Pseudomonadota</taxon>
        <taxon>Gammaproteobacteria</taxon>
        <taxon>Pasteurellales</taxon>
        <taxon>Pasteurellaceae</taxon>
        <taxon>Actinobacillus</taxon>
    </lineage>
</organism>
<accession>B3H176</accession>
<proteinExistence type="inferred from homology"/>
<feature type="chain" id="PRO_1000097475" description="Translational regulator CsrA">
    <location>
        <begin position="1"/>
        <end position="64"/>
    </location>
</feature>